<organism>
    <name type="scientific">Schizosaccharomyces pombe (strain 972 / ATCC 24843)</name>
    <name type="common">Fission yeast</name>
    <dbReference type="NCBI Taxonomy" id="284812"/>
    <lineage>
        <taxon>Eukaryota</taxon>
        <taxon>Fungi</taxon>
        <taxon>Dikarya</taxon>
        <taxon>Ascomycota</taxon>
        <taxon>Taphrinomycotina</taxon>
        <taxon>Schizosaccharomycetes</taxon>
        <taxon>Schizosaccharomycetales</taxon>
        <taxon>Schizosaccharomycetaceae</taxon>
        <taxon>Schizosaccharomyces</taxon>
    </lineage>
</organism>
<feature type="chain" id="PRO_0000116566" description="Uncharacterized protein C56F8.02">
    <location>
        <begin position="1"/>
        <end position="1517"/>
    </location>
</feature>
<feature type="transmembrane region" description="Helical" evidence="1">
    <location>
        <begin position="231"/>
        <end position="251"/>
    </location>
</feature>
<feature type="transmembrane region" description="Helical" evidence="1">
    <location>
        <begin position="397"/>
        <end position="417"/>
    </location>
</feature>
<feature type="transmembrane region" description="Helical" evidence="1">
    <location>
        <begin position="510"/>
        <end position="530"/>
    </location>
</feature>
<feature type="transmembrane region" description="Helical" evidence="1">
    <location>
        <begin position="612"/>
        <end position="632"/>
    </location>
</feature>
<feature type="transmembrane region" description="Helical" evidence="1">
    <location>
        <begin position="720"/>
        <end position="740"/>
    </location>
</feature>
<feature type="transmembrane region" description="Helical" evidence="1">
    <location>
        <begin position="956"/>
        <end position="976"/>
    </location>
</feature>
<feature type="transmembrane region" description="Helical" evidence="1">
    <location>
        <begin position="985"/>
        <end position="1005"/>
    </location>
</feature>
<feature type="transmembrane region" description="Helical" evidence="1">
    <location>
        <begin position="1051"/>
        <end position="1071"/>
    </location>
</feature>
<feature type="transmembrane region" description="Helical" evidence="1">
    <location>
        <begin position="1114"/>
        <end position="1134"/>
    </location>
</feature>
<feature type="transmembrane region" description="Helical" evidence="1">
    <location>
        <begin position="1261"/>
        <end position="1281"/>
    </location>
</feature>
<feature type="transmembrane region" description="Helical" evidence="1">
    <location>
        <begin position="1353"/>
        <end position="1373"/>
    </location>
</feature>
<feature type="transmembrane region" description="Helical" evidence="1">
    <location>
        <begin position="1408"/>
        <end position="1428"/>
    </location>
</feature>
<feature type="region of interest" description="Disordered" evidence="2">
    <location>
        <begin position="1"/>
        <end position="26"/>
    </location>
</feature>
<feature type="compositionally biased region" description="Polar residues" evidence="2">
    <location>
        <begin position="1"/>
        <end position="13"/>
    </location>
</feature>
<feature type="glycosylation site" description="N-linked (GlcNAc...) asparagine" evidence="1">
    <location>
        <position position="35"/>
    </location>
</feature>
<feature type="glycosylation site" description="N-linked (GlcNAc...) asparagine" evidence="1">
    <location>
        <position position="40"/>
    </location>
</feature>
<feature type="glycosylation site" description="N-linked (GlcNAc...) asparagine" evidence="1">
    <location>
        <position position="76"/>
    </location>
</feature>
<feature type="glycosylation site" description="N-linked (GlcNAc...) asparagine" evidence="1">
    <location>
        <position position="917"/>
    </location>
</feature>
<feature type="glycosylation site" description="N-linked (GlcNAc...) asparagine" evidence="1">
    <location>
        <position position="1178"/>
    </location>
</feature>
<feature type="glycosylation site" description="N-linked (GlcNAc...) asparagine" evidence="1">
    <location>
        <position position="1321"/>
    </location>
</feature>
<sequence>MNQFPNQPGNFGQNYYKPVQGSIPANSEATNFQQNNSRENKSECELRQNSIAASMSAYPNGMYAGAENHNVENHENYTMVGHDHMEEVYGDDLVNEPRIAYSSDIVATFDGKDFGSNLHVDDTLDQQWAHFAGKQQHPLEPREIPFPVTDPLNSKIEMKQFTNIAAVLRYRGVHSAKKTAFIILDNKGKEFTSITWEKLASRAEKVAQVIRDKSGLFRSDRVVLMYRDCEAIDFVVSLFGCFIAGVVAVPINRFDDYNELSSILTTTSARLALTTDANLKAFQRDLNAKKLHWPKNVEWWKTNEFGGFHLKKKAEMPPLQVPDLAYIEFSRSPIGELHGVVISHRTILHQMNCLAAIHATAPAYESDKLDYLSIDREYTEGLSKSGLFLTYLDLRQAIGLILGVLHTVFSGYTTVWCPQNAVFVPGLWANLATRYRASFMLTDYAGLKTIAYNYQNDPKATLGFSKKHSVDLSSLRMCMVDCLNVDCEFQEIVSDRWLKPLGNQNPRATFVPLLCLPEHGGMVISMKDWIGGEEFMSPKGFKSPRTPENEISEVLLEKEALKLNEVVVLAEDDKARRQSKHPNTIRVGAFWYPFVDATLAIVDPETQVLCLPNIVGEIWVDSPSLSGGFFALPKQTEAIFHARTSFISSDTFQPIPSNQEFLRTGLLGFIRKGKVYVLGLYEDRLQQKVEWVDNGKQDTIFFHHYTSHLVNTIMRKVSKVFDCSAFDIFVNSEHLPVVLLESPAANIPTEANGNQVVINYGLLDLITTECVECLLEDHQVRVYCVLICAPFTLPRVTKNGRQEIGNMMCRRAFEHGTLPFLYVKFAVERAVLNLPVGEDAIDGIWSSYASGIRQNLLSDQELQYSGFIDRSLRYDAKTSVDISSCHTMLQLLQLRVAKNAEDIAYITIDGRGREGKNITWRKFDQRVATIIRYLQKKKYIKPGRVVVLMYTHSEDFVYALYACFYLGLIPIPVPPLDHMRLSEDVPAFLFLIKHYYVSAVLVNSEADTALRAKTTSQHLKQSAMAAKVVLPSFIVTSKISKQTKSIKELNVKLDPICLDPAFPALVWAFWSPDHRLTLTAYNHQTLLSICQIHKETCQMTHKRPLLGHVRSMSGIGFFHTCLMGVFLGTTTYLLSPVDFANNPLLLFQIISKYKIKDTYATFQTLNYIQNQQPTKWPNLSCLENLMIPHDGRISAFYIASLQKYFVKHGLSPYAFSTVYSNCLNPFISTRSYMGAIPTPQLLDLRALRHGLIQPCESADKPYALPLLDSGMVPVSTQLAIVNPDTRELCRVGEYGEIWMRSSANAISFFQSTDPVDMMRFNATNSDGFLGNGYVRTGDLGFLQITSHSMGPNAPVVDMQLLYVLGPIGETFEVNGLSHFPSDIEDTIERSHPRIARGGTAVFQSAGRVVVVIEALGQDFLAAIVPVVINSILDEHQIIADVVAFTSRGNFPRSRLREKQRGKILASWVTGRLRTTQVFYIRGSGEGEFQSSYVPDYNPSLRSTPSVSSRSTLPQRVF</sequence>
<name>YD22_SCHPO</name>
<comment type="subcellular location">
    <subcellularLocation>
        <location evidence="3">Membrane</location>
        <topology evidence="3">Multi-pass membrane protein</topology>
    </subcellularLocation>
</comment>
<comment type="similarity">
    <text evidence="3">To S.pombe SpAC22F3.04.</text>
</comment>
<keyword id="KW-0325">Glycoprotein</keyword>
<keyword id="KW-0472">Membrane</keyword>
<keyword id="KW-1185">Reference proteome</keyword>
<keyword id="KW-0812">Transmembrane</keyword>
<keyword id="KW-1133">Transmembrane helix</keyword>
<gene>
    <name type="ORF">SPAC56F8.02</name>
</gene>
<reference key="1">
    <citation type="journal article" date="2002" name="Nature">
        <title>The genome sequence of Schizosaccharomyces pombe.</title>
        <authorList>
            <person name="Wood V."/>
            <person name="Gwilliam R."/>
            <person name="Rajandream M.A."/>
            <person name="Lyne M.H."/>
            <person name="Lyne R."/>
            <person name="Stewart A."/>
            <person name="Sgouros J.G."/>
            <person name="Peat N."/>
            <person name="Hayles J."/>
            <person name="Baker S.G."/>
            <person name="Basham D."/>
            <person name="Bowman S."/>
            <person name="Brooks K."/>
            <person name="Brown D."/>
            <person name="Brown S."/>
            <person name="Chillingworth T."/>
            <person name="Churcher C.M."/>
            <person name="Collins M."/>
            <person name="Connor R."/>
            <person name="Cronin A."/>
            <person name="Davis P."/>
            <person name="Feltwell T."/>
            <person name="Fraser A."/>
            <person name="Gentles S."/>
            <person name="Goble A."/>
            <person name="Hamlin N."/>
            <person name="Harris D.E."/>
            <person name="Hidalgo J."/>
            <person name="Hodgson G."/>
            <person name="Holroyd S."/>
            <person name="Hornsby T."/>
            <person name="Howarth S."/>
            <person name="Huckle E.J."/>
            <person name="Hunt S."/>
            <person name="Jagels K."/>
            <person name="James K.D."/>
            <person name="Jones L."/>
            <person name="Jones M."/>
            <person name="Leather S."/>
            <person name="McDonald S."/>
            <person name="McLean J."/>
            <person name="Mooney P."/>
            <person name="Moule S."/>
            <person name="Mungall K.L."/>
            <person name="Murphy L.D."/>
            <person name="Niblett D."/>
            <person name="Odell C."/>
            <person name="Oliver K."/>
            <person name="O'Neil S."/>
            <person name="Pearson D."/>
            <person name="Quail M.A."/>
            <person name="Rabbinowitsch E."/>
            <person name="Rutherford K.M."/>
            <person name="Rutter S."/>
            <person name="Saunders D."/>
            <person name="Seeger K."/>
            <person name="Sharp S."/>
            <person name="Skelton J."/>
            <person name="Simmonds M.N."/>
            <person name="Squares R."/>
            <person name="Squares S."/>
            <person name="Stevens K."/>
            <person name="Taylor K."/>
            <person name="Taylor R.G."/>
            <person name="Tivey A."/>
            <person name="Walsh S.V."/>
            <person name="Warren T."/>
            <person name="Whitehead S."/>
            <person name="Woodward J.R."/>
            <person name="Volckaert G."/>
            <person name="Aert R."/>
            <person name="Robben J."/>
            <person name="Grymonprez B."/>
            <person name="Weltjens I."/>
            <person name="Vanstreels E."/>
            <person name="Rieger M."/>
            <person name="Schaefer M."/>
            <person name="Mueller-Auer S."/>
            <person name="Gabel C."/>
            <person name="Fuchs M."/>
            <person name="Duesterhoeft A."/>
            <person name="Fritzc C."/>
            <person name="Holzer E."/>
            <person name="Moestl D."/>
            <person name="Hilbert H."/>
            <person name="Borzym K."/>
            <person name="Langer I."/>
            <person name="Beck A."/>
            <person name="Lehrach H."/>
            <person name="Reinhardt R."/>
            <person name="Pohl T.M."/>
            <person name="Eger P."/>
            <person name="Zimmermann W."/>
            <person name="Wedler H."/>
            <person name="Wambutt R."/>
            <person name="Purnelle B."/>
            <person name="Goffeau A."/>
            <person name="Cadieu E."/>
            <person name="Dreano S."/>
            <person name="Gloux S."/>
            <person name="Lelaure V."/>
            <person name="Mottier S."/>
            <person name="Galibert F."/>
            <person name="Aves S.J."/>
            <person name="Xiang Z."/>
            <person name="Hunt C."/>
            <person name="Moore K."/>
            <person name="Hurst S.M."/>
            <person name="Lucas M."/>
            <person name="Rochet M."/>
            <person name="Gaillardin C."/>
            <person name="Tallada V.A."/>
            <person name="Garzon A."/>
            <person name="Thode G."/>
            <person name="Daga R.R."/>
            <person name="Cruzado L."/>
            <person name="Jimenez J."/>
            <person name="Sanchez M."/>
            <person name="del Rey F."/>
            <person name="Benito J."/>
            <person name="Dominguez A."/>
            <person name="Revuelta J.L."/>
            <person name="Moreno S."/>
            <person name="Armstrong J."/>
            <person name="Forsburg S.L."/>
            <person name="Cerutti L."/>
            <person name="Lowe T."/>
            <person name="McCombie W.R."/>
            <person name="Paulsen I."/>
            <person name="Potashkin J."/>
            <person name="Shpakovski G.V."/>
            <person name="Ussery D."/>
            <person name="Barrell B.G."/>
            <person name="Nurse P."/>
        </authorList>
    </citation>
    <scope>NUCLEOTIDE SEQUENCE [LARGE SCALE GENOMIC DNA]</scope>
    <source>
        <strain>972 / ATCC 24843</strain>
    </source>
</reference>
<proteinExistence type="predicted"/>
<dbReference type="EMBL" id="CU329670">
    <property type="protein sequence ID" value="CAA93573.1"/>
    <property type="molecule type" value="Genomic_DNA"/>
</dbReference>
<dbReference type="PIR" id="T38912">
    <property type="entry name" value="T38912"/>
</dbReference>
<dbReference type="SMR" id="Q10250"/>
<dbReference type="BioGRID" id="279752">
    <property type="interactions" value="33"/>
</dbReference>
<dbReference type="FunCoup" id="Q10250">
    <property type="interactions" value="118"/>
</dbReference>
<dbReference type="STRING" id="284812.Q10250"/>
<dbReference type="iPTMnet" id="Q10250"/>
<dbReference type="PaxDb" id="4896-SPAC56F8.02.1"/>
<dbReference type="EnsemblFungi" id="SPAC56F8.02.1">
    <property type="protein sequence ID" value="SPAC56F8.02.1:pep"/>
    <property type="gene ID" value="SPAC56F8.02"/>
</dbReference>
<dbReference type="KEGG" id="spo:2543329"/>
<dbReference type="PomBase" id="SPAC56F8.02"/>
<dbReference type="VEuPathDB" id="FungiDB:SPAC56F8.02"/>
<dbReference type="eggNOG" id="KOG3628">
    <property type="taxonomic scope" value="Eukaryota"/>
</dbReference>
<dbReference type="HOGENOM" id="CLU_000737_0_0_1"/>
<dbReference type="InParanoid" id="Q10250"/>
<dbReference type="OMA" id="LVWTYWT"/>
<dbReference type="PhylomeDB" id="Q10250"/>
<dbReference type="PRO" id="PR:Q10250"/>
<dbReference type="Proteomes" id="UP000002485">
    <property type="component" value="Chromosome I"/>
</dbReference>
<dbReference type="GO" id="GO:0032153">
    <property type="term" value="C:cell division site"/>
    <property type="evidence" value="ECO:0007005"/>
    <property type="project" value="PomBase"/>
</dbReference>
<dbReference type="GO" id="GO:0016020">
    <property type="term" value="C:membrane"/>
    <property type="evidence" value="ECO:0007669"/>
    <property type="project" value="UniProtKB-SubCell"/>
</dbReference>
<dbReference type="GO" id="GO:0072686">
    <property type="term" value="C:mitotic spindle"/>
    <property type="evidence" value="ECO:0007005"/>
    <property type="project" value="PomBase"/>
</dbReference>
<dbReference type="GO" id="GO:0003824">
    <property type="term" value="F:catalytic activity"/>
    <property type="evidence" value="ECO:0000255"/>
    <property type="project" value="PomBase"/>
</dbReference>
<dbReference type="GO" id="GO:0006085">
    <property type="term" value="P:acetyl-CoA biosynthetic process"/>
    <property type="evidence" value="ECO:0000250"/>
    <property type="project" value="PomBase"/>
</dbReference>
<dbReference type="CDD" id="cd05905">
    <property type="entry name" value="Dip2"/>
    <property type="match status" value="2"/>
</dbReference>
<dbReference type="FunFam" id="3.40.50.12780:FF:000167">
    <property type="entry name" value="Meiotically up-regulated gene 62 protein"/>
    <property type="match status" value="1"/>
</dbReference>
<dbReference type="FunFam" id="3.40.50.12780:FF:000052">
    <property type="entry name" value="YOR093C-like protein"/>
    <property type="match status" value="1"/>
</dbReference>
<dbReference type="Gene3D" id="3.30.300.30">
    <property type="match status" value="1"/>
</dbReference>
<dbReference type="Gene3D" id="3.40.50.12780">
    <property type="entry name" value="N-terminal domain of ligase-like"/>
    <property type="match status" value="3"/>
</dbReference>
<dbReference type="InterPro" id="IPR025110">
    <property type="entry name" value="AMP-bd_C"/>
</dbReference>
<dbReference type="InterPro" id="IPR045851">
    <property type="entry name" value="AMP-bd_C_sf"/>
</dbReference>
<dbReference type="InterPro" id="IPR000873">
    <property type="entry name" value="AMP-dep_synth/lig_dom"/>
</dbReference>
<dbReference type="InterPro" id="IPR042099">
    <property type="entry name" value="ANL_N_sf"/>
</dbReference>
<dbReference type="InterPro" id="IPR037337">
    <property type="entry name" value="Dip2-like_dom"/>
</dbReference>
<dbReference type="InterPro" id="IPR056881">
    <property type="entry name" value="Mug62_dom"/>
</dbReference>
<dbReference type="PANTHER" id="PTHR22754:SF32">
    <property type="entry name" value="DISCO-INTERACTING PROTEIN 2"/>
    <property type="match status" value="1"/>
</dbReference>
<dbReference type="PANTHER" id="PTHR22754">
    <property type="entry name" value="DISCO-INTERACTING PROTEIN 2 DIP2 -RELATED"/>
    <property type="match status" value="1"/>
</dbReference>
<dbReference type="Pfam" id="PF00501">
    <property type="entry name" value="AMP-binding"/>
    <property type="match status" value="2"/>
</dbReference>
<dbReference type="Pfam" id="PF23024">
    <property type="entry name" value="AMP-dom_DIP2-like"/>
    <property type="match status" value="1"/>
</dbReference>
<dbReference type="Pfam" id="PF24919">
    <property type="entry name" value="Mug62"/>
    <property type="match status" value="1"/>
</dbReference>
<dbReference type="SUPFAM" id="SSF56801">
    <property type="entry name" value="Acetyl-CoA synthetase-like"/>
    <property type="match status" value="2"/>
</dbReference>
<protein>
    <recommendedName>
        <fullName>Uncharacterized protein C56F8.02</fullName>
    </recommendedName>
</protein>
<evidence type="ECO:0000255" key="1"/>
<evidence type="ECO:0000256" key="2">
    <source>
        <dbReference type="SAM" id="MobiDB-lite"/>
    </source>
</evidence>
<evidence type="ECO:0000305" key="3"/>
<accession>Q10250</accession>